<name>WTR33_ARATH</name>
<dbReference type="EMBL" id="Z97339">
    <property type="protein sequence ID" value="CAB10332.1"/>
    <property type="status" value="ALT_SEQ"/>
    <property type="molecule type" value="Genomic_DNA"/>
</dbReference>
<dbReference type="EMBL" id="AL161541">
    <property type="protein sequence ID" value="CAB78596.1"/>
    <property type="status" value="ALT_SEQ"/>
    <property type="molecule type" value="Genomic_DNA"/>
</dbReference>
<dbReference type="EMBL" id="CP002687">
    <property type="protein sequence ID" value="AEE83622.1"/>
    <property type="molecule type" value="Genomic_DNA"/>
</dbReference>
<dbReference type="EMBL" id="CP002687">
    <property type="protein sequence ID" value="ANM66068.1"/>
    <property type="molecule type" value="Genomic_DNA"/>
</dbReference>
<dbReference type="EMBL" id="AK117451">
    <property type="protein sequence ID" value="BAC42116.1"/>
    <property type="molecule type" value="mRNA"/>
</dbReference>
<dbReference type="EMBL" id="AY080726">
    <property type="protein sequence ID" value="AAL86328.1"/>
    <property type="molecule type" value="mRNA"/>
</dbReference>
<dbReference type="PIR" id="B71420">
    <property type="entry name" value="B71420"/>
</dbReference>
<dbReference type="RefSeq" id="NP_001319951.1">
    <molecule id="F4JK59-1"/>
    <property type="nucleotide sequence ID" value="NM_001341052.1"/>
</dbReference>
<dbReference type="RefSeq" id="NP_567469.2">
    <molecule id="F4JK59-1"/>
    <property type="nucleotide sequence ID" value="NM_117644.3"/>
</dbReference>
<dbReference type="SMR" id="F4JK59"/>
<dbReference type="STRING" id="3702.F4JK59"/>
<dbReference type="PaxDb" id="3702-AT4G15540.1"/>
<dbReference type="ProteomicsDB" id="242725">
    <molecule id="F4JK59-1"/>
</dbReference>
<dbReference type="EnsemblPlants" id="AT4G15540.1">
    <molecule id="F4JK59-1"/>
    <property type="protein sequence ID" value="AT4G15540.1"/>
    <property type="gene ID" value="AT4G15540"/>
</dbReference>
<dbReference type="EnsemblPlants" id="AT4G15540.2">
    <molecule id="F4JK59-1"/>
    <property type="protein sequence ID" value="AT4G15540.2"/>
    <property type="gene ID" value="AT4G15540"/>
</dbReference>
<dbReference type="GeneID" id="827227"/>
<dbReference type="Gramene" id="AT4G15540.1">
    <molecule id="F4JK59-1"/>
    <property type="protein sequence ID" value="AT4G15540.1"/>
    <property type="gene ID" value="AT4G15540"/>
</dbReference>
<dbReference type="Gramene" id="AT4G15540.2">
    <molecule id="F4JK59-1"/>
    <property type="protein sequence ID" value="AT4G15540.2"/>
    <property type="gene ID" value="AT4G15540"/>
</dbReference>
<dbReference type="KEGG" id="ath:AT4G15540"/>
<dbReference type="Araport" id="AT4G15540"/>
<dbReference type="TAIR" id="AT4G15540">
    <property type="gene designation" value="UMAMIT38"/>
</dbReference>
<dbReference type="HOGENOM" id="CLU_025359_0_1_1"/>
<dbReference type="InParanoid" id="F4JK59"/>
<dbReference type="OMA" id="QTHIMEI"/>
<dbReference type="PhylomeDB" id="F4JK59"/>
<dbReference type="PRO" id="PR:F4JK59"/>
<dbReference type="Proteomes" id="UP000006548">
    <property type="component" value="Chromosome 4"/>
</dbReference>
<dbReference type="ExpressionAtlas" id="F4JK59">
    <property type="expression patterns" value="baseline and differential"/>
</dbReference>
<dbReference type="GO" id="GO:0016020">
    <property type="term" value="C:membrane"/>
    <property type="evidence" value="ECO:0007669"/>
    <property type="project" value="UniProtKB-SubCell"/>
</dbReference>
<dbReference type="GO" id="GO:0022857">
    <property type="term" value="F:transmembrane transporter activity"/>
    <property type="evidence" value="ECO:0007669"/>
    <property type="project" value="InterPro"/>
</dbReference>
<dbReference type="InterPro" id="IPR000620">
    <property type="entry name" value="EamA_dom"/>
</dbReference>
<dbReference type="InterPro" id="IPR030184">
    <property type="entry name" value="WAT1-related"/>
</dbReference>
<dbReference type="PANTHER" id="PTHR31218">
    <property type="entry name" value="WAT1-RELATED PROTEIN"/>
    <property type="match status" value="1"/>
</dbReference>
<dbReference type="Pfam" id="PF00892">
    <property type="entry name" value="EamA"/>
    <property type="match status" value="1"/>
</dbReference>
<dbReference type="SUPFAM" id="SSF103481">
    <property type="entry name" value="Multidrug resistance efflux transporter EmrE"/>
    <property type="match status" value="1"/>
</dbReference>
<organism>
    <name type="scientific">Arabidopsis thaliana</name>
    <name type="common">Mouse-ear cress</name>
    <dbReference type="NCBI Taxonomy" id="3702"/>
    <lineage>
        <taxon>Eukaryota</taxon>
        <taxon>Viridiplantae</taxon>
        <taxon>Streptophyta</taxon>
        <taxon>Embryophyta</taxon>
        <taxon>Tracheophyta</taxon>
        <taxon>Spermatophyta</taxon>
        <taxon>Magnoliopsida</taxon>
        <taxon>eudicotyledons</taxon>
        <taxon>Gunneridae</taxon>
        <taxon>Pentapetalae</taxon>
        <taxon>rosids</taxon>
        <taxon>malvids</taxon>
        <taxon>Brassicales</taxon>
        <taxon>Brassicaceae</taxon>
        <taxon>Camelineae</taxon>
        <taxon>Arabidopsis</taxon>
    </lineage>
</organism>
<proteinExistence type="evidence at transcript level"/>
<protein>
    <recommendedName>
        <fullName>WAT1-related protein At4g15540</fullName>
    </recommendedName>
</protein>
<evidence type="ECO:0000250" key="1"/>
<evidence type="ECO:0000255" key="2"/>
<evidence type="ECO:0000303" key="3">
    <source>
    </source>
</evidence>
<evidence type="ECO:0000305" key="4"/>
<comment type="subcellular location">
    <subcellularLocation>
        <location evidence="1">Membrane</location>
        <topology evidence="4">Multi-pass membrane protein</topology>
    </subcellularLocation>
</comment>
<comment type="alternative products">
    <event type="alternative splicing"/>
    <isoform>
        <id>F4JK59-1</id>
        <name>1</name>
        <sequence type="displayed"/>
    </isoform>
    <isoform>
        <id>F4JK59-2</id>
        <name>2</name>
        <sequence type="described" ref="VSP_045520"/>
    </isoform>
</comment>
<comment type="similarity">
    <text evidence="4">Belongs to the drug/metabolite transporter (DMT) superfamily. Plant drug/metabolite exporter (P-DME) (TC 2.A.7.4) family.</text>
</comment>
<comment type="sequence caution" evidence="4">
    <conflict type="erroneous gene model prediction">
        <sequence resource="EMBL-CDS" id="CAB10332"/>
    </conflict>
    <text>The predicted gene At4g15540 has been split into 2 genes: At4g15540 and At4g15545.</text>
</comment>
<comment type="sequence caution" evidence="4">
    <conflict type="erroneous gene model prediction">
        <sequence resource="EMBL-CDS" id="CAB78596"/>
    </conflict>
    <text>The predicted gene At4g15540 has been split into 2 genes: At4g15540 and At4g15545.</text>
</comment>
<keyword id="KW-0025">Alternative splicing</keyword>
<keyword id="KW-0472">Membrane</keyword>
<keyword id="KW-1185">Reference proteome</keyword>
<keyword id="KW-0677">Repeat</keyword>
<keyword id="KW-0812">Transmembrane</keyword>
<keyword id="KW-1133">Transmembrane helix</keyword>
<sequence>MREETVSWKYFKRDVVPFTAMIAIECTTVGSSILYKAATLRGFSFYVFVFYAYVGATLVLLLLSLIFGRSRSLPTAKSSLFFKIFLLALLGLTSRVAGCKGIEYSSPTLSSAISNLTPAFTFILAIFFRMEQVMLRSSATQAKIIGTIVSISGALVIVLYKGPKLLVAASFTSFESSWIIGGLLLGLQFLLLSVWFILQTHIMEIYPEEIAVVFCYNLCATLISGTVCLLVEKDLNSWQLKPGFSLASVIYSGLFDTSLGSVIHTWGLHVKGPVYISLFKPLSIAIAVAMAAIFLGDTLHLGSVIGSVILSFGFYTVIWGKAREDSTKTVSDSEQSLLLPSHDREED</sequence>
<feature type="chain" id="PRO_0000421353" description="WAT1-related protein At4g15540">
    <location>
        <begin position="1"/>
        <end position="347"/>
    </location>
</feature>
<feature type="transmembrane region" description="Helical" evidence="2">
    <location>
        <begin position="15"/>
        <end position="35"/>
    </location>
</feature>
<feature type="transmembrane region" description="Helical" evidence="2">
    <location>
        <begin position="47"/>
        <end position="67"/>
    </location>
</feature>
<feature type="transmembrane region" description="Helical" evidence="2">
    <location>
        <begin position="73"/>
        <end position="93"/>
    </location>
</feature>
<feature type="transmembrane region" description="Helical" evidence="2">
    <location>
        <begin position="108"/>
        <end position="128"/>
    </location>
</feature>
<feature type="transmembrane region" description="Helical" evidence="2">
    <location>
        <begin position="139"/>
        <end position="159"/>
    </location>
</feature>
<feature type="transmembrane region" description="Helical" evidence="2">
    <location>
        <begin position="178"/>
        <end position="198"/>
    </location>
</feature>
<feature type="transmembrane region" description="Helical" evidence="2">
    <location>
        <begin position="210"/>
        <end position="230"/>
    </location>
</feature>
<feature type="transmembrane region" description="Helical" evidence="2">
    <location>
        <begin position="243"/>
        <end position="263"/>
    </location>
</feature>
<feature type="transmembrane region" description="Helical" evidence="2">
    <location>
        <begin position="276"/>
        <end position="296"/>
    </location>
</feature>
<feature type="transmembrane region" description="Helical" evidence="2">
    <location>
        <begin position="299"/>
        <end position="319"/>
    </location>
</feature>
<feature type="domain" description="EamA 1">
    <location>
        <begin position="30"/>
        <end position="158"/>
    </location>
</feature>
<feature type="domain" description="EamA 2">
    <location>
        <begin position="216"/>
        <end position="317"/>
    </location>
</feature>
<feature type="splice variant" id="VSP_045520" description="In isoform 2." evidence="3">
    <location>
        <begin position="1"/>
        <end position="129"/>
    </location>
</feature>
<gene>
    <name type="ordered locus">At4g15540</name>
    <name type="ORF">dl3810w</name>
    <name type="ORF">FCAALL.328</name>
</gene>
<accession>F4JK59</accession>
<accession>O23405</accession>
<accession>Q8GYQ3</accession>
<accession>Q8RXQ9</accession>
<reference key="1">
    <citation type="journal article" date="1998" name="Nature">
        <title>Analysis of 1.9 Mb of contiguous sequence from chromosome 4 of Arabidopsis thaliana.</title>
        <authorList>
            <person name="Bevan M."/>
            <person name="Bancroft I."/>
            <person name="Bent E."/>
            <person name="Love K."/>
            <person name="Goodman H.M."/>
            <person name="Dean C."/>
            <person name="Bergkamp R."/>
            <person name="Dirkse W."/>
            <person name="van Staveren M."/>
            <person name="Stiekema W."/>
            <person name="Drost L."/>
            <person name="Ridley P."/>
            <person name="Hudson S.-A."/>
            <person name="Patel K."/>
            <person name="Murphy G."/>
            <person name="Piffanelli P."/>
            <person name="Wedler H."/>
            <person name="Wedler E."/>
            <person name="Wambutt R."/>
            <person name="Weitzenegger T."/>
            <person name="Pohl T."/>
            <person name="Terryn N."/>
            <person name="Gielen J."/>
            <person name="Villarroel R."/>
            <person name="De Clercq R."/>
            <person name="van Montagu M."/>
            <person name="Lecharny A."/>
            <person name="Aubourg S."/>
            <person name="Gy I."/>
            <person name="Kreis M."/>
            <person name="Lao N."/>
            <person name="Kavanagh T."/>
            <person name="Hempel S."/>
            <person name="Kotter P."/>
            <person name="Entian K.-D."/>
            <person name="Rieger M."/>
            <person name="Schaefer M."/>
            <person name="Funk B."/>
            <person name="Mueller-Auer S."/>
            <person name="Silvey M."/>
            <person name="James R."/>
            <person name="Monfort A."/>
            <person name="Pons A."/>
            <person name="Puigdomenech P."/>
            <person name="Douka A."/>
            <person name="Voukelatou E."/>
            <person name="Milioni D."/>
            <person name="Hatzopoulos P."/>
            <person name="Piravandi E."/>
            <person name="Obermaier B."/>
            <person name="Hilbert H."/>
            <person name="Duesterhoeft A."/>
            <person name="Moores T."/>
            <person name="Jones J.D.G."/>
            <person name="Eneva T."/>
            <person name="Palme K."/>
            <person name="Benes V."/>
            <person name="Rechmann S."/>
            <person name="Ansorge W."/>
            <person name="Cooke R."/>
            <person name="Berger C."/>
            <person name="Delseny M."/>
            <person name="Voet M."/>
            <person name="Volckaert G."/>
            <person name="Mewes H.-W."/>
            <person name="Klosterman S."/>
            <person name="Schueller C."/>
            <person name="Chalwatzis N."/>
        </authorList>
    </citation>
    <scope>NUCLEOTIDE SEQUENCE [LARGE SCALE GENOMIC DNA]</scope>
    <source>
        <strain>cv. Columbia</strain>
    </source>
</reference>
<reference key="2">
    <citation type="journal article" date="1999" name="Nature">
        <title>Sequence and analysis of chromosome 4 of the plant Arabidopsis thaliana.</title>
        <authorList>
            <person name="Mayer K.F.X."/>
            <person name="Schueller C."/>
            <person name="Wambutt R."/>
            <person name="Murphy G."/>
            <person name="Volckaert G."/>
            <person name="Pohl T."/>
            <person name="Duesterhoeft A."/>
            <person name="Stiekema W."/>
            <person name="Entian K.-D."/>
            <person name="Terryn N."/>
            <person name="Harris B."/>
            <person name="Ansorge W."/>
            <person name="Brandt P."/>
            <person name="Grivell L.A."/>
            <person name="Rieger M."/>
            <person name="Weichselgartner M."/>
            <person name="de Simone V."/>
            <person name="Obermaier B."/>
            <person name="Mache R."/>
            <person name="Mueller M."/>
            <person name="Kreis M."/>
            <person name="Delseny M."/>
            <person name="Puigdomenech P."/>
            <person name="Watson M."/>
            <person name="Schmidtheini T."/>
            <person name="Reichert B."/>
            <person name="Portetelle D."/>
            <person name="Perez-Alonso M."/>
            <person name="Boutry M."/>
            <person name="Bancroft I."/>
            <person name="Vos P."/>
            <person name="Hoheisel J."/>
            <person name="Zimmermann W."/>
            <person name="Wedler H."/>
            <person name="Ridley P."/>
            <person name="Langham S.-A."/>
            <person name="McCullagh B."/>
            <person name="Bilham L."/>
            <person name="Robben J."/>
            <person name="van der Schueren J."/>
            <person name="Grymonprez B."/>
            <person name="Chuang Y.-J."/>
            <person name="Vandenbussche F."/>
            <person name="Braeken M."/>
            <person name="Weltjens I."/>
            <person name="Voet M."/>
            <person name="Bastiaens I."/>
            <person name="Aert R."/>
            <person name="Defoor E."/>
            <person name="Weitzenegger T."/>
            <person name="Bothe G."/>
            <person name="Ramsperger U."/>
            <person name="Hilbert H."/>
            <person name="Braun M."/>
            <person name="Holzer E."/>
            <person name="Brandt A."/>
            <person name="Peters S."/>
            <person name="van Staveren M."/>
            <person name="Dirkse W."/>
            <person name="Mooijman P."/>
            <person name="Klein Lankhorst R."/>
            <person name="Rose M."/>
            <person name="Hauf J."/>
            <person name="Koetter P."/>
            <person name="Berneiser S."/>
            <person name="Hempel S."/>
            <person name="Feldpausch M."/>
            <person name="Lamberth S."/>
            <person name="Van den Daele H."/>
            <person name="De Keyser A."/>
            <person name="Buysshaert C."/>
            <person name="Gielen J."/>
            <person name="Villarroel R."/>
            <person name="De Clercq R."/>
            <person name="van Montagu M."/>
            <person name="Rogers J."/>
            <person name="Cronin A."/>
            <person name="Quail M.A."/>
            <person name="Bray-Allen S."/>
            <person name="Clark L."/>
            <person name="Doggett J."/>
            <person name="Hall S."/>
            <person name="Kay M."/>
            <person name="Lennard N."/>
            <person name="McLay K."/>
            <person name="Mayes R."/>
            <person name="Pettett A."/>
            <person name="Rajandream M.A."/>
            <person name="Lyne M."/>
            <person name="Benes V."/>
            <person name="Rechmann S."/>
            <person name="Borkova D."/>
            <person name="Bloecker H."/>
            <person name="Scharfe M."/>
            <person name="Grimm M."/>
            <person name="Loehnert T.-H."/>
            <person name="Dose S."/>
            <person name="de Haan M."/>
            <person name="Maarse A.C."/>
            <person name="Schaefer M."/>
            <person name="Mueller-Auer S."/>
            <person name="Gabel C."/>
            <person name="Fuchs M."/>
            <person name="Fartmann B."/>
            <person name="Granderath K."/>
            <person name="Dauner D."/>
            <person name="Herzl A."/>
            <person name="Neumann S."/>
            <person name="Argiriou A."/>
            <person name="Vitale D."/>
            <person name="Liguori R."/>
            <person name="Piravandi E."/>
            <person name="Massenet O."/>
            <person name="Quigley F."/>
            <person name="Clabauld G."/>
            <person name="Muendlein A."/>
            <person name="Felber R."/>
            <person name="Schnabl S."/>
            <person name="Hiller R."/>
            <person name="Schmidt W."/>
            <person name="Lecharny A."/>
            <person name="Aubourg S."/>
            <person name="Chefdor F."/>
            <person name="Cooke R."/>
            <person name="Berger C."/>
            <person name="Monfort A."/>
            <person name="Casacuberta E."/>
            <person name="Gibbons T."/>
            <person name="Weber N."/>
            <person name="Vandenbol M."/>
            <person name="Bargues M."/>
            <person name="Terol J."/>
            <person name="Torres A."/>
            <person name="Perez-Perez A."/>
            <person name="Purnelle B."/>
            <person name="Bent E."/>
            <person name="Johnson S."/>
            <person name="Tacon D."/>
            <person name="Jesse T."/>
            <person name="Heijnen L."/>
            <person name="Schwarz S."/>
            <person name="Scholler P."/>
            <person name="Heber S."/>
            <person name="Francs P."/>
            <person name="Bielke C."/>
            <person name="Frishman D."/>
            <person name="Haase D."/>
            <person name="Lemcke K."/>
            <person name="Mewes H.-W."/>
            <person name="Stocker S."/>
            <person name="Zaccaria P."/>
            <person name="Bevan M."/>
            <person name="Wilson R.K."/>
            <person name="de la Bastide M."/>
            <person name="Habermann K."/>
            <person name="Parnell L."/>
            <person name="Dedhia N."/>
            <person name="Gnoj L."/>
            <person name="Schutz K."/>
            <person name="Huang E."/>
            <person name="Spiegel L."/>
            <person name="Sekhon M."/>
            <person name="Murray J."/>
            <person name="Sheet P."/>
            <person name="Cordes M."/>
            <person name="Abu-Threideh J."/>
            <person name="Stoneking T."/>
            <person name="Kalicki J."/>
            <person name="Graves T."/>
            <person name="Harmon G."/>
            <person name="Edwards J."/>
            <person name="Latreille P."/>
            <person name="Courtney L."/>
            <person name="Cloud J."/>
            <person name="Abbott A."/>
            <person name="Scott K."/>
            <person name="Johnson D."/>
            <person name="Minx P."/>
            <person name="Bentley D."/>
            <person name="Fulton B."/>
            <person name="Miller N."/>
            <person name="Greco T."/>
            <person name="Kemp K."/>
            <person name="Kramer J."/>
            <person name="Fulton L."/>
            <person name="Mardis E."/>
            <person name="Dante M."/>
            <person name="Pepin K."/>
            <person name="Hillier L.W."/>
            <person name="Nelson J."/>
            <person name="Spieth J."/>
            <person name="Ryan E."/>
            <person name="Andrews S."/>
            <person name="Geisel C."/>
            <person name="Layman D."/>
            <person name="Du H."/>
            <person name="Ali J."/>
            <person name="Berghoff A."/>
            <person name="Jones K."/>
            <person name="Drone K."/>
            <person name="Cotton M."/>
            <person name="Joshu C."/>
            <person name="Antonoiu B."/>
            <person name="Zidanic M."/>
            <person name="Strong C."/>
            <person name="Sun H."/>
            <person name="Lamar B."/>
            <person name="Yordan C."/>
            <person name="Ma P."/>
            <person name="Zhong J."/>
            <person name="Preston R."/>
            <person name="Vil D."/>
            <person name="Shekher M."/>
            <person name="Matero A."/>
            <person name="Shah R."/>
            <person name="Swaby I.K."/>
            <person name="O'Shaughnessy A."/>
            <person name="Rodriguez M."/>
            <person name="Hoffman J."/>
            <person name="Till S."/>
            <person name="Granat S."/>
            <person name="Shohdy N."/>
            <person name="Hasegawa A."/>
            <person name="Hameed A."/>
            <person name="Lodhi M."/>
            <person name="Johnson A."/>
            <person name="Chen E."/>
            <person name="Marra M.A."/>
            <person name="Martienssen R."/>
            <person name="McCombie W.R."/>
        </authorList>
    </citation>
    <scope>NUCLEOTIDE SEQUENCE [LARGE SCALE GENOMIC DNA]</scope>
    <source>
        <strain>cv. Columbia</strain>
    </source>
</reference>
<reference key="3">
    <citation type="journal article" date="2017" name="Plant J.">
        <title>Araport11: a complete reannotation of the Arabidopsis thaliana reference genome.</title>
        <authorList>
            <person name="Cheng C.Y."/>
            <person name="Krishnakumar V."/>
            <person name="Chan A.P."/>
            <person name="Thibaud-Nissen F."/>
            <person name="Schobel S."/>
            <person name="Town C.D."/>
        </authorList>
    </citation>
    <scope>GENOME REANNOTATION</scope>
    <source>
        <strain>cv. Columbia</strain>
    </source>
</reference>
<reference key="4">
    <citation type="journal article" date="2002" name="Science">
        <title>Functional annotation of a full-length Arabidopsis cDNA collection.</title>
        <authorList>
            <person name="Seki M."/>
            <person name="Narusaka M."/>
            <person name="Kamiya A."/>
            <person name="Ishida J."/>
            <person name="Satou M."/>
            <person name="Sakurai T."/>
            <person name="Nakajima M."/>
            <person name="Enju A."/>
            <person name="Akiyama K."/>
            <person name="Oono Y."/>
            <person name="Muramatsu M."/>
            <person name="Hayashizaki Y."/>
            <person name="Kawai J."/>
            <person name="Carninci P."/>
            <person name="Itoh M."/>
            <person name="Ishii Y."/>
            <person name="Arakawa T."/>
            <person name="Shibata K."/>
            <person name="Shinagawa A."/>
            <person name="Shinozaki K."/>
        </authorList>
    </citation>
    <scope>NUCLEOTIDE SEQUENCE [LARGE SCALE MRNA] (ISOFORM 2)</scope>
    <source>
        <strain>cv. Columbia</strain>
    </source>
</reference>
<reference key="5">
    <citation type="journal article" date="2003" name="Science">
        <title>Empirical analysis of transcriptional activity in the Arabidopsis genome.</title>
        <authorList>
            <person name="Yamada K."/>
            <person name="Lim J."/>
            <person name="Dale J.M."/>
            <person name="Chen H."/>
            <person name="Shinn P."/>
            <person name="Palm C.J."/>
            <person name="Southwick A.M."/>
            <person name="Wu H.C."/>
            <person name="Kim C.J."/>
            <person name="Nguyen M."/>
            <person name="Pham P.K."/>
            <person name="Cheuk R.F."/>
            <person name="Karlin-Newmann G."/>
            <person name="Liu S.X."/>
            <person name="Lam B."/>
            <person name="Sakano H."/>
            <person name="Wu T."/>
            <person name="Yu G."/>
            <person name="Miranda M."/>
            <person name="Quach H.L."/>
            <person name="Tripp M."/>
            <person name="Chang C.H."/>
            <person name="Lee J.M."/>
            <person name="Toriumi M.J."/>
            <person name="Chan M.M."/>
            <person name="Tang C.C."/>
            <person name="Onodera C.S."/>
            <person name="Deng J.M."/>
            <person name="Akiyama K."/>
            <person name="Ansari Y."/>
            <person name="Arakawa T."/>
            <person name="Banh J."/>
            <person name="Banno F."/>
            <person name="Bowser L."/>
            <person name="Brooks S.Y."/>
            <person name="Carninci P."/>
            <person name="Chao Q."/>
            <person name="Choy N."/>
            <person name="Enju A."/>
            <person name="Goldsmith A.D."/>
            <person name="Gurjal M."/>
            <person name="Hansen N.F."/>
            <person name="Hayashizaki Y."/>
            <person name="Johnson-Hopson C."/>
            <person name="Hsuan V.W."/>
            <person name="Iida K."/>
            <person name="Karnes M."/>
            <person name="Khan S."/>
            <person name="Koesema E."/>
            <person name="Ishida J."/>
            <person name="Jiang P.X."/>
            <person name="Jones T."/>
            <person name="Kawai J."/>
            <person name="Kamiya A."/>
            <person name="Meyers C."/>
            <person name="Nakajima M."/>
            <person name="Narusaka M."/>
            <person name="Seki M."/>
            <person name="Sakurai T."/>
            <person name="Satou M."/>
            <person name="Tamse R."/>
            <person name="Vaysberg M."/>
            <person name="Wallender E.K."/>
            <person name="Wong C."/>
            <person name="Yamamura Y."/>
            <person name="Yuan S."/>
            <person name="Shinozaki K."/>
            <person name="Davis R.W."/>
            <person name="Theologis A."/>
            <person name="Ecker J.R."/>
        </authorList>
    </citation>
    <scope>NUCLEOTIDE SEQUENCE [LARGE SCALE MRNA] OF 24-347 (ISOFORM 1)</scope>
    <source>
        <strain>cv. Columbia</strain>
    </source>
</reference>